<reference key="1">
    <citation type="journal article" date="2005" name="Proc. Natl. Acad. Sci. U.S.A.">
        <title>The psychrophilic lifestyle as revealed by the genome sequence of Colwellia psychrerythraea 34H through genomic and proteomic analyses.</title>
        <authorList>
            <person name="Methe B.A."/>
            <person name="Nelson K.E."/>
            <person name="Deming J.W."/>
            <person name="Momen B."/>
            <person name="Melamud E."/>
            <person name="Zhang X."/>
            <person name="Moult J."/>
            <person name="Madupu R."/>
            <person name="Nelson W.C."/>
            <person name="Dodson R.J."/>
            <person name="Brinkac L.M."/>
            <person name="Daugherty S.C."/>
            <person name="Durkin A.S."/>
            <person name="DeBoy R.T."/>
            <person name="Kolonay J.F."/>
            <person name="Sullivan S.A."/>
            <person name="Zhou L."/>
            <person name="Davidsen T.M."/>
            <person name="Wu M."/>
            <person name="Huston A.L."/>
            <person name="Lewis M."/>
            <person name="Weaver B."/>
            <person name="Weidman J.F."/>
            <person name="Khouri H."/>
            <person name="Utterback T.R."/>
            <person name="Feldblyum T.V."/>
            <person name="Fraser C.M."/>
        </authorList>
    </citation>
    <scope>NUCLEOTIDE SEQUENCE [LARGE SCALE GENOMIC DNA]</scope>
    <source>
        <strain>34H / ATCC BAA-681</strain>
    </source>
</reference>
<gene>
    <name evidence="1" type="primary">deoA</name>
    <name type="ordered locus">CPS_1970</name>
</gene>
<keyword id="KW-0328">Glycosyltransferase</keyword>
<keyword id="KW-0808">Transferase</keyword>
<evidence type="ECO:0000255" key="1">
    <source>
        <dbReference type="HAMAP-Rule" id="MF_01628"/>
    </source>
</evidence>
<comment type="function">
    <text evidence="1">The enzymes which catalyze the reversible phosphorolysis of pyrimidine nucleosides are involved in the degradation of these compounds and in their utilization as carbon and energy sources, or in the rescue of pyrimidine bases for nucleotide synthesis.</text>
</comment>
<comment type="catalytic activity">
    <reaction evidence="1">
        <text>thymidine + phosphate = 2-deoxy-alpha-D-ribose 1-phosphate + thymine</text>
        <dbReference type="Rhea" id="RHEA:16037"/>
        <dbReference type="ChEBI" id="CHEBI:17748"/>
        <dbReference type="ChEBI" id="CHEBI:17821"/>
        <dbReference type="ChEBI" id="CHEBI:43474"/>
        <dbReference type="ChEBI" id="CHEBI:57259"/>
        <dbReference type="EC" id="2.4.2.4"/>
    </reaction>
</comment>
<comment type="pathway">
    <text evidence="1">Pyrimidine metabolism; dTMP biosynthesis via salvage pathway; dTMP from thymine: step 1/2.</text>
</comment>
<comment type="subunit">
    <text evidence="1">Homodimer.</text>
</comment>
<comment type="similarity">
    <text evidence="1">Belongs to the thymidine/pyrimidine-nucleoside phosphorylase family.</text>
</comment>
<dbReference type="EC" id="2.4.2.4" evidence="1"/>
<dbReference type="EMBL" id="CP000083">
    <property type="protein sequence ID" value="AAZ26339.1"/>
    <property type="molecule type" value="Genomic_DNA"/>
</dbReference>
<dbReference type="RefSeq" id="WP_011042794.1">
    <property type="nucleotide sequence ID" value="NC_003910.7"/>
</dbReference>
<dbReference type="SMR" id="Q483R6"/>
<dbReference type="STRING" id="167879.CPS_1970"/>
<dbReference type="KEGG" id="cps:CPS_1970"/>
<dbReference type="HOGENOM" id="CLU_025040_0_1_6"/>
<dbReference type="UniPathway" id="UPA00578">
    <property type="reaction ID" value="UER00638"/>
</dbReference>
<dbReference type="Proteomes" id="UP000000547">
    <property type="component" value="Chromosome"/>
</dbReference>
<dbReference type="GO" id="GO:0005829">
    <property type="term" value="C:cytosol"/>
    <property type="evidence" value="ECO:0007669"/>
    <property type="project" value="TreeGrafter"/>
</dbReference>
<dbReference type="GO" id="GO:0004645">
    <property type="term" value="F:1,4-alpha-oligoglucan phosphorylase activity"/>
    <property type="evidence" value="ECO:0007669"/>
    <property type="project" value="InterPro"/>
</dbReference>
<dbReference type="GO" id="GO:0009032">
    <property type="term" value="F:thymidine phosphorylase activity"/>
    <property type="evidence" value="ECO:0007669"/>
    <property type="project" value="UniProtKB-UniRule"/>
</dbReference>
<dbReference type="GO" id="GO:0006206">
    <property type="term" value="P:pyrimidine nucleobase metabolic process"/>
    <property type="evidence" value="ECO:0007669"/>
    <property type="project" value="InterPro"/>
</dbReference>
<dbReference type="GO" id="GO:0046104">
    <property type="term" value="P:thymidine metabolic process"/>
    <property type="evidence" value="ECO:0007669"/>
    <property type="project" value="UniProtKB-UniRule"/>
</dbReference>
<dbReference type="FunFam" id="3.40.1030.10:FF:000001">
    <property type="entry name" value="Thymidine phosphorylase"/>
    <property type="match status" value="1"/>
</dbReference>
<dbReference type="Gene3D" id="3.40.1030.10">
    <property type="entry name" value="Nucleoside phosphorylase/phosphoribosyltransferase catalytic domain"/>
    <property type="match status" value="1"/>
</dbReference>
<dbReference type="Gene3D" id="3.90.1170.30">
    <property type="entry name" value="Pyrimidine nucleoside phosphorylase-like, C-terminal domain"/>
    <property type="match status" value="1"/>
</dbReference>
<dbReference type="Gene3D" id="1.20.970.10">
    <property type="entry name" value="Transferase, Pyrimidine Nucleoside Phosphorylase, Chain C"/>
    <property type="match status" value="1"/>
</dbReference>
<dbReference type="HAMAP" id="MF_01628">
    <property type="entry name" value="Thymid_phosp"/>
    <property type="match status" value="1"/>
</dbReference>
<dbReference type="InterPro" id="IPR000312">
    <property type="entry name" value="Glycosyl_Trfase_fam3"/>
</dbReference>
<dbReference type="InterPro" id="IPR017459">
    <property type="entry name" value="Glycosyl_Trfase_fam3_N_dom"/>
</dbReference>
<dbReference type="InterPro" id="IPR036320">
    <property type="entry name" value="Glycosyl_Trfase_fam3_N_dom_sf"/>
</dbReference>
<dbReference type="InterPro" id="IPR035902">
    <property type="entry name" value="Nuc_phospho_transferase"/>
</dbReference>
<dbReference type="InterPro" id="IPR036566">
    <property type="entry name" value="PYNP-like_C_sf"/>
</dbReference>
<dbReference type="InterPro" id="IPR013102">
    <property type="entry name" value="PYNP_C"/>
</dbReference>
<dbReference type="InterPro" id="IPR018090">
    <property type="entry name" value="Pyrmidine_PPas_bac/euk"/>
</dbReference>
<dbReference type="InterPro" id="IPR017872">
    <property type="entry name" value="Pyrmidine_PPase_CS"/>
</dbReference>
<dbReference type="InterPro" id="IPR000053">
    <property type="entry name" value="Thymidine/pyrmidine_PPase"/>
</dbReference>
<dbReference type="InterPro" id="IPR013465">
    <property type="entry name" value="Thymidine_Pase"/>
</dbReference>
<dbReference type="NCBIfam" id="NF004490">
    <property type="entry name" value="PRK05820.1"/>
    <property type="match status" value="1"/>
</dbReference>
<dbReference type="NCBIfam" id="TIGR02643">
    <property type="entry name" value="T_phosphoryl"/>
    <property type="match status" value="1"/>
</dbReference>
<dbReference type="NCBIfam" id="TIGR02644">
    <property type="entry name" value="Y_phosphoryl"/>
    <property type="match status" value="1"/>
</dbReference>
<dbReference type="PANTHER" id="PTHR10515">
    <property type="entry name" value="THYMIDINE PHOSPHORYLASE"/>
    <property type="match status" value="1"/>
</dbReference>
<dbReference type="PANTHER" id="PTHR10515:SF0">
    <property type="entry name" value="THYMIDINE PHOSPHORYLASE"/>
    <property type="match status" value="1"/>
</dbReference>
<dbReference type="Pfam" id="PF02885">
    <property type="entry name" value="Glycos_trans_3N"/>
    <property type="match status" value="1"/>
</dbReference>
<dbReference type="Pfam" id="PF00591">
    <property type="entry name" value="Glycos_transf_3"/>
    <property type="match status" value="1"/>
</dbReference>
<dbReference type="Pfam" id="PF07831">
    <property type="entry name" value="PYNP_C"/>
    <property type="match status" value="1"/>
</dbReference>
<dbReference type="PIRSF" id="PIRSF000478">
    <property type="entry name" value="TP_PyNP"/>
    <property type="match status" value="1"/>
</dbReference>
<dbReference type="SMART" id="SM00941">
    <property type="entry name" value="PYNP_C"/>
    <property type="match status" value="1"/>
</dbReference>
<dbReference type="SUPFAM" id="SSF52418">
    <property type="entry name" value="Nucleoside phosphorylase/phosphoribosyltransferase catalytic domain"/>
    <property type="match status" value="1"/>
</dbReference>
<dbReference type="SUPFAM" id="SSF47648">
    <property type="entry name" value="Nucleoside phosphorylase/phosphoribosyltransferase N-terminal domain"/>
    <property type="match status" value="1"/>
</dbReference>
<dbReference type="SUPFAM" id="SSF54680">
    <property type="entry name" value="Pyrimidine nucleoside phosphorylase C-terminal domain"/>
    <property type="match status" value="1"/>
</dbReference>
<dbReference type="PROSITE" id="PS00647">
    <property type="entry name" value="THYMID_PHOSPHORYLASE"/>
    <property type="match status" value="1"/>
</dbReference>
<feature type="chain" id="PRO_0000059052" description="Thymidine phosphorylase">
    <location>
        <begin position="1"/>
        <end position="438"/>
    </location>
</feature>
<sequence length="438" mass="46748">MSVTAKIIPQEIIRLKRDGKILDEQAINGFVSGLVDGNFSDSQVGAMAMAIFQQGMSIDERVNFTKAMMRSGEVLSWEGFDGPIVDKHSTGGVGDKVSFMLAAIVAACGGYVPMISGRGLGHTGGTADKLESIAGFNVQPSISEFKRIVKDVGVAIISQTDNLAPADKRLYSIRDVTATVESIPLITASILSKKLAAGLDVLVMDVKVGNGAMMNNLDDAKALAQSITSVANGAGVKTQAIITDMNQVLGTSAGNAIEMYETVKYLTGKQREPRLHKIVQALASAMLINTNLASSEKDAREKIDKVLNSGLAAEKFDRMVSALGGPKNFIEKPWDSMKKANVITEVRALQHGYIAQTDTRAIGMSVVGLGGGRTAPTQQVDHSVGFDRILPLGVQVNRGEVIARLHAKDEDSANRAIEQFNNAITYSEESPELPPVIY</sequence>
<protein>
    <recommendedName>
        <fullName evidence="1">Thymidine phosphorylase</fullName>
        <ecNumber evidence="1">2.4.2.4</ecNumber>
    </recommendedName>
    <alternativeName>
        <fullName evidence="1">TdRPase</fullName>
    </alternativeName>
</protein>
<organism>
    <name type="scientific">Colwellia psychrerythraea (strain 34H / ATCC BAA-681)</name>
    <name type="common">Vibrio psychroerythus</name>
    <dbReference type="NCBI Taxonomy" id="167879"/>
    <lineage>
        <taxon>Bacteria</taxon>
        <taxon>Pseudomonadati</taxon>
        <taxon>Pseudomonadota</taxon>
        <taxon>Gammaproteobacteria</taxon>
        <taxon>Alteromonadales</taxon>
        <taxon>Colwelliaceae</taxon>
        <taxon>Colwellia</taxon>
    </lineage>
</organism>
<accession>Q483R6</accession>
<name>TYPH_COLP3</name>
<proteinExistence type="inferred from homology"/>